<accession>Q2NRB6</accession>
<protein>
    <recommendedName>
        <fullName evidence="2">tRNA (guanine-N(7)-)-methyltransferase</fullName>
        <ecNumber evidence="2">2.1.1.33</ecNumber>
    </recommendedName>
    <alternativeName>
        <fullName evidence="2">tRNA (guanine(46)-N(7))-methyltransferase</fullName>
    </alternativeName>
    <alternativeName>
        <fullName evidence="2">tRNA(m7G46)-methyltransferase</fullName>
    </alternativeName>
</protein>
<comment type="function">
    <text evidence="2">Catalyzes the formation of N(7)-methylguanine at position 46 (m7G46) in tRNA.</text>
</comment>
<comment type="catalytic activity">
    <reaction evidence="2">
        <text>guanosine(46) in tRNA + S-adenosyl-L-methionine = N(7)-methylguanosine(46) in tRNA + S-adenosyl-L-homocysteine</text>
        <dbReference type="Rhea" id="RHEA:42708"/>
        <dbReference type="Rhea" id="RHEA-COMP:10188"/>
        <dbReference type="Rhea" id="RHEA-COMP:10189"/>
        <dbReference type="ChEBI" id="CHEBI:57856"/>
        <dbReference type="ChEBI" id="CHEBI:59789"/>
        <dbReference type="ChEBI" id="CHEBI:74269"/>
        <dbReference type="ChEBI" id="CHEBI:74480"/>
        <dbReference type="EC" id="2.1.1.33"/>
    </reaction>
</comment>
<comment type="pathway">
    <text evidence="2">tRNA modification; N(7)-methylguanine-tRNA biosynthesis.</text>
</comment>
<comment type="subunit">
    <text evidence="2">Monomer.</text>
</comment>
<comment type="similarity">
    <text evidence="2">Belongs to the class I-like SAM-binding methyltransferase superfamily. TrmB family.</text>
</comment>
<organism>
    <name type="scientific">Sodalis glossinidius (strain morsitans)</name>
    <dbReference type="NCBI Taxonomy" id="343509"/>
    <lineage>
        <taxon>Bacteria</taxon>
        <taxon>Pseudomonadati</taxon>
        <taxon>Pseudomonadota</taxon>
        <taxon>Gammaproteobacteria</taxon>
        <taxon>Enterobacterales</taxon>
        <taxon>Bruguierivoracaceae</taxon>
        <taxon>Sodalis</taxon>
    </lineage>
</organism>
<feature type="chain" id="PRO_0000288230" description="tRNA (guanine-N(7)-)-methyltransferase">
    <location>
        <begin position="1"/>
        <end position="239"/>
    </location>
</feature>
<feature type="region of interest" description="Interaction with RNA" evidence="2">
    <location>
        <begin position="150"/>
        <end position="155"/>
    </location>
</feature>
<feature type="active site" evidence="1">
    <location>
        <position position="144"/>
    </location>
</feature>
<feature type="binding site" evidence="2">
    <location>
        <position position="69"/>
    </location>
    <ligand>
        <name>S-adenosyl-L-methionine</name>
        <dbReference type="ChEBI" id="CHEBI:59789"/>
    </ligand>
</feature>
<feature type="binding site" evidence="2">
    <location>
        <position position="94"/>
    </location>
    <ligand>
        <name>S-adenosyl-L-methionine</name>
        <dbReference type="ChEBI" id="CHEBI:59789"/>
    </ligand>
</feature>
<feature type="binding site" evidence="2">
    <location>
        <position position="121"/>
    </location>
    <ligand>
        <name>S-adenosyl-L-methionine</name>
        <dbReference type="ChEBI" id="CHEBI:59789"/>
    </ligand>
</feature>
<feature type="binding site" evidence="2">
    <location>
        <position position="144"/>
    </location>
    <ligand>
        <name>S-adenosyl-L-methionine</name>
        <dbReference type="ChEBI" id="CHEBI:59789"/>
    </ligand>
</feature>
<feature type="binding site" evidence="2">
    <location>
        <position position="148"/>
    </location>
    <ligand>
        <name>substrate</name>
    </ligand>
</feature>
<feature type="binding site" evidence="2">
    <location>
        <position position="180"/>
    </location>
    <ligand>
        <name>substrate</name>
    </ligand>
</feature>
<feature type="binding site" evidence="2">
    <location>
        <begin position="217"/>
        <end position="220"/>
    </location>
    <ligand>
        <name>substrate</name>
    </ligand>
</feature>
<keyword id="KW-0489">Methyltransferase</keyword>
<keyword id="KW-0949">S-adenosyl-L-methionine</keyword>
<keyword id="KW-0808">Transferase</keyword>
<keyword id="KW-0819">tRNA processing</keyword>
<evidence type="ECO:0000250" key="1"/>
<evidence type="ECO:0000255" key="2">
    <source>
        <dbReference type="HAMAP-Rule" id="MF_01057"/>
    </source>
</evidence>
<reference key="1">
    <citation type="journal article" date="2006" name="Genome Res.">
        <title>Massive genome erosion and functional adaptations provide insights into the symbiotic lifestyle of Sodalis glossinidius in the tsetse host.</title>
        <authorList>
            <person name="Toh H."/>
            <person name="Weiss B.L."/>
            <person name="Perkin S.A.H."/>
            <person name="Yamashita A."/>
            <person name="Oshima K."/>
            <person name="Hattori M."/>
            <person name="Aksoy S."/>
        </authorList>
    </citation>
    <scope>NUCLEOTIDE SEQUENCE [LARGE SCALE GENOMIC DNA]</scope>
    <source>
        <strain>morsitans</strain>
    </source>
</reference>
<dbReference type="EC" id="2.1.1.33" evidence="2"/>
<dbReference type="EMBL" id="AP008232">
    <property type="protein sequence ID" value="BAE75309.1"/>
    <property type="molecule type" value="Genomic_DNA"/>
</dbReference>
<dbReference type="RefSeq" id="WP_011411764.1">
    <property type="nucleotide sequence ID" value="NC_007712.1"/>
</dbReference>
<dbReference type="SMR" id="Q2NRB6"/>
<dbReference type="STRING" id="343509.SG2034"/>
<dbReference type="KEGG" id="sgl:SG2034"/>
<dbReference type="eggNOG" id="COG0220">
    <property type="taxonomic scope" value="Bacteria"/>
</dbReference>
<dbReference type="HOGENOM" id="CLU_050910_0_1_6"/>
<dbReference type="OrthoDB" id="9802090at2"/>
<dbReference type="BioCyc" id="SGLO343509:SGP1_RS18580-MONOMER"/>
<dbReference type="UniPathway" id="UPA00989"/>
<dbReference type="Proteomes" id="UP000001932">
    <property type="component" value="Chromosome"/>
</dbReference>
<dbReference type="GO" id="GO:0043527">
    <property type="term" value="C:tRNA methyltransferase complex"/>
    <property type="evidence" value="ECO:0007669"/>
    <property type="project" value="TreeGrafter"/>
</dbReference>
<dbReference type="GO" id="GO:0008176">
    <property type="term" value="F:tRNA (guanine(46)-N7)-methyltransferase activity"/>
    <property type="evidence" value="ECO:0007669"/>
    <property type="project" value="UniProtKB-UniRule"/>
</dbReference>
<dbReference type="FunFam" id="3.40.50.150:FF:000024">
    <property type="entry name" value="tRNA (guanine-N(7)-)-methyltransferase"/>
    <property type="match status" value="1"/>
</dbReference>
<dbReference type="Gene3D" id="3.40.50.150">
    <property type="entry name" value="Vaccinia Virus protein VP39"/>
    <property type="match status" value="1"/>
</dbReference>
<dbReference type="HAMAP" id="MF_01057">
    <property type="entry name" value="tRNA_methyltr_TrmB"/>
    <property type="match status" value="1"/>
</dbReference>
<dbReference type="InterPro" id="IPR029063">
    <property type="entry name" value="SAM-dependent_MTases_sf"/>
</dbReference>
<dbReference type="InterPro" id="IPR003358">
    <property type="entry name" value="tRNA_(Gua-N-7)_MeTrfase_Trmb"/>
</dbReference>
<dbReference type="InterPro" id="IPR055361">
    <property type="entry name" value="tRNA_methyltr_TrmB_bact"/>
</dbReference>
<dbReference type="NCBIfam" id="TIGR00091">
    <property type="entry name" value="tRNA (guanosine(46)-N7)-methyltransferase TrmB"/>
    <property type="match status" value="1"/>
</dbReference>
<dbReference type="PANTHER" id="PTHR23417">
    <property type="entry name" value="3-DEOXY-D-MANNO-OCTULOSONIC-ACID TRANSFERASE/TRNA GUANINE-N 7 - -METHYLTRANSFERASE"/>
    <property type="match status" value="1"/>
</dbReference>
<dbReference type="PANTHER" id="PTHR23417:SF14">
    <property type="entry name" value="PENTACOTRIPEPTIDE-REPEAT REGION OF PRORP DOMAIN-CONTAINING PROTEIN"/>
    <property type="match status" value="1"/>
</dbReference>
<dbReference type="Pfam" id="PF02390">
    <property type="entry name" value="Methyltransf_4"/>
    <property type="match status" value="1"/>
</dbReference>
<dbReference type="SUPFAM" id="SSF53335">
    <property type="entry name" value="S-adenosyl-L-methionine-dependent methyltransferases"/>
    <property type="match status" value="1"/>
</dbReference>
<dbReference type="PROSITE" id="PS51625">
    <property type="entry name" value="SAM_MT_TRMB"/>
    <property type="match status" value="1"/>
</dbReference>
<gene>
    <name evidence="2" type="primary">trmB</name>
    <name type="ordered locus">SG2034</name>
</gene>
<proteinExistence type="inferred from homology"/>
<sequence length="239" mass="26428">MSNNVISPEFDEQGRALRRIRSFVRRQGRLTKGQQYALDTLWPAMGTDYQAQPLDLTALFGRAAPVTLEIGFGMGASLVTMAAAHPEQNFIGIEVHLPGVGACLASAQEAGVSNLRVMCHDAVEVLEQMIPDASLALVQLFFPDPWHKARHNKRRIIQAPFVELVGRKLAAGGVFHMATDWQPYAEHMLAVMSDAAFFRSLSSTGDYVPRPASRPLTKFEQRGQRLGHGVWDLMFAKTV</sequence>
<name>TRMB_SODGM</name>